<keyword id="KW-0067">ATP-binding</keyword>
<keyword id="KW-0227">DNA damage</keyword>
<keyword id="KW-0233">DNA recombination</keyword>
<keyword id="KW-0238">DNA-binding</keyword>
<keyword id="KW-0547">Nucleotide-binding</keyword>
<dbReference type="EMBL" id="CP001140">
    <property type="protein sequence ID" value="ACL11541.1"/>
    <property type="molecule type" value="Genomic_DNA"/>
</dbReference>
<dbReference type="RefSeq" id="WP_012608882.1">
    <property type="nucleotide sequence ID" value="NC_011766.1"/>
</dbReference>
<dbReference type="SMR" id="B8D610"/>
<dbReference type="STRING" id="490899.DKAM_1215"/>
<dbReference type="GeneID" id="7171290"/>
<dbReference type="KEGG" id="dka:DKAM_1215"/>
<dbReference type="eggNOG" id="arCOG00415">
    <property type="taxonomic scope" value="Archaea"/>
</dbReference>
<dbReference type="HOGENOM" id="CLU_041732_0_0_2"/>
<dbReference type="Proteomes" id="UP000006903">
    <property type="component" value="Chromosome"/>
</dbReference>
<dbReference type="GO" id="GO:0005524">
    <property type="term" value="F:ATP binding"/>
    <property type="evidence" value="ECO:0007669"/>
    <property type="project" value="UniProtKB-UniRule"/>
</dbReference>
<dbReference type="GO" id="GO:0016887">
    <property type="term" value="F:ATP hydrolysis activity"/>
    <property type="evidence" value="ECO:0007669"/>
    <property type="project" value="InterPro"/>
</dbReference>
<dbReference type="GO" id="GO:0140664">
    <property type="term" value="F:ATP-dependent DNA damage sensor activity"/>
    <property type="evidence" value="ECO:0007669"/>
    <property type="project" value="InterPro"/>
</dbReference>
<dbReference type="GO" id="GO:0003684">
    <property type="term" value="F:damaged DNA binding"/>
    <property type="evidence" value="ECO:0007669"/>
    <property type="project" value="UniProtKB-UniRule"/>
</dbReference>
<dbReference type="GO" id="GO:0006310">
    <property type="term" value="P:DNA recombination"/>
    <property type="evidence" value="ECO:0007669"/>
    <property type="project" value="UniProtKB-UniRule"/>
</dbReference>
<dbReference type="GO" id="GO:0006281">
    <property type="term" value="P:DNA repair"/>
    <property type="evidence" value="ECO:0007669"/>
    <property type="project" value="UniProtKB-UniRule"/>
</dbReference>
<dbReference type="CDD" id="cd19515">
    <property type="entry name" value="archRadA"/>
    <property type="match status" value="1"/>
</dbReference>
<dbReference type="FunFam" id="3.40.50.300:FF:002052">
    <property type="entry name" value="DNA repair protein RAD51 homolog"/>
    <property type="match status" value="1"/>
</dbReference>
<dbReference type="Gene3D" id="1.10.150.20">
    <property type="entry name" value="5' to 3' exonuclease, C-terminal subdomain"/>
    <property type="match status" value="1"/>
</dbReference>
<dbReference type="Gene3D" id="3.40.50.300">
    <property type="entry name" value="P-loop containing nucleotide triphosphate hydrolases"/>
    <property type="match status" value="1"/>
</dbReference>
<dbReference type="HAMAP" id="MF_00348">
    <property type="entry name" value="RadA_arch"/>
    <property type="match status" value="1"/>
</dbReference>
<dbReference type="InterPro" id="IPR003593">
    <property type="entry name" value="AAA+_ATPase"/>
</dbReference>
<dbReference type="InterPro" id="IPR013632">
    <property type="entry name" value="DNA_recomb/repair_Rad51_C"/>
</dbReference>
<dbReference type="InterPro" id="IPR011938">
    <property type="entry name" value="DNA_recomb/repair_RadA"/>
</dbReference>
<dbReference type="InterPro" id="IPR016467">
    <property type="entry name" value="DNA_recomb/repair_RecA-like"/>
</dbReference>
<dbReference type="InterPro" id="IPR010995">
    <property type="entry name" value="DNA_repair_Rad51/TF_NusA_a-hlx"/>
</dbReference>
<dbReference type="InterPro" id="IPR027417">
    <property type="entry name" value="P-loop_NTPase"/>
</dbReference>
<dbReference type="InterPro" id="IPR020588">
    <property type="entry name" value="RecA_ATP-bd"/>
</dbReference>
<dbReference type="InterPro" id="IPR020587">
    <property type="entry name" value="RecA_monomer-monomer_interface"/>
</dbReference>
<dbReference type="NCBIfam" id="NF003301">
    <property type="entry name" value="PRK04301.1"/>
    <property type="match status" value="1"/>
</dbReference>
<dbReference type="NCBIfam" id="TIGR02236">
    <property type="entry name" value="recomb_radA"/>
    <property type="match status" value="1"/>
</dbReference>
<dbReference type="PANTHER" id="PTHR22942:SF30">
    <property type="entry name" value="MEIOTIC RECOMBINATION PROTEIN DMC1_LIM15 HOMOLOG"/>
    <property type="match status" value="1"/>
</dbReference>
<dbReference type="PANTHER" id="PTHR22942">
    <property type="entry name" value="RECA/RAD51/RADA DNA STRAND-PAIRING FAMILY MEMBER"/>
    <property type="match status" value="1"/>
</dbReference>
<dbReference type="Pfam" id="PF08423">
    <property type="entry name" value="Rad51"/>
    <property type="match status" value="1"/>
</dbReference>
<dbReference type="PIRSF" id="PIRSF005856">
    <property type="entry name" value="Rad51"/>
    <property type="match status" value="1"/>
</dbReference>
<dbReference type="SMART" id="SM00382">
    <property type="entry name" value="AAA"/>
    <property type="match status" value="1"/>
</dbReference>
<dbReference type="SUPFAM" id="SSF52540">
    <property type="entry name" value="P-loop containing nucleoside triphosphate hydrolases"/>
    <property type="match status" value="1"/>
</dbReference>
<dbReference type="SUPFAM" id="SSF47794">
    <property type="entry name" value="Rad51 N-terminal domain-like"/>
    <property type="match status" value="1"/>
</dbReference>
<dbReference type="PROSITE" id="PS50162">
    <property type="entry name" value="RECA_2"/>
    <property type="match status" value="1"/>
</dbReference>
<dbReference type="PROSITE" id="PS50163">
    <property type="entry name" value="RECA_3"/>
    <property type="match status" value="1"/>
</dbReference>
<organism>
    <name type="scientific">Desulfurococcus amylolyticus (strain DSM 18924 / JCM 16383 / VKM B-2413 / 1221n)</name>
    <name type="common">Desulfurococcus kamchatkensis</name>
    <dbReference type="NCBI Taxonomy" id="490899"/>
    <lineage>
        <taxon>Archaea</taxon>
        <taxon>Thermoproteota</taxon>
        <taxon>Thermoprotei</taxon>
        <taxon>Desulfurococcales</taxon>
        <taxon>Desulfurococcaceae</taxon>
        <taxon>Desulfurococcus</taxon>
    </lineage>
</organism>
<accession>B8D610</accession>
<protein>
    <recommendedName>
        <fullName evidence="1">DNA repair and recombination protein RadA</fullName>
    </recommendedName>
</protein>
<proteinExistence type="inferred from homology"/>
<gene>
    <name evidence="1" type="primary">radA</name>
    <name type="ordered locus">DKAM_1215</name>
</gene>
<sequence>MSEEKETIKERSSGFISVRDIPGVGSSIADKLEAAGYLSAWSIVVARAEELAERTGLPVLTVQKIIENARKMLGITFKTAREVKQERLNIGKITTGSKSLDELLGGGVETKTITEFFGEYGSGKTQICHQLSVNVQLTPEKGGLNGRAVYIDTEGTFRWERIEAMARALGLDPDKVMDNIYYMRAYNSDHQIAIVDELFTFVPKNDVRLVILDSVTSHFRAEYPGREHLAERQQKLNSHLHQLMRLAEAYNVAVVVTNQVMARPDVFYGDPTTAVGGHVLAHTPGVRIQLRKSKGNKRIARVVDAPHLPEGEVVFVITEEGIRDSEEE</sequence>
<name>RADA_DESA1</name>
<feature type="chain" id="PRO_1000133406" description="DNA repair and recombination protein RadA">
    <location>
        <begin position="1"/>
        <end position="328"/>
    </location>
</feature>
<feature type="binding site" evidence="1">
    <location>
        <begin position="118"/>
        <end position="125"/>
    </location>
    <ligand>
        <name>ATP</name>
        <dbReference type="ChEBI" id="CHEBI:30616"/>
    </ligand>
</feature>
<reference key="1">
    <citation type="journal article" date="2009" name="J. Bacteriol.">
        <title>Complete genome sequence of the anaerobic, protein-degrading hyperthermophilic crenarchaeon Desulfurococcus kamchatkensis.</title>
        <authorList>
            <person name="Ravin N.V."/>
            <person name="Mardanov A.V."/>
            <person name="Beletsky A.V."/>
            <person name="Kublanov I.V."/>
            <person name="Kolganova T.V."/>
            <person name="Lebedinsky A.V."/>
            <person name="Chernyh N.A."/>
            <person name="Bonch-Osmolovskaya E.A."/>
            <person name="Skryabin K.G."/>
        </authorList>
    </citation>
    <scope>NUCLEOTIDE SEQUENCE [LARGE SCALE GENOMIC DNA]</scope>
    <source>
        <strain>DSM 18924 / JCM 16383 / VKM B-2413 / 1221n</strain>
    </source>
</reference>
<evidence type="ECO:0000255" key="1">
    <source>
        <dbReference type="HAMAP-Rule" id="MF_00348"/>
    </source>
</evidence>
<comment type="function">
    <text evidence="1">Involved in DNA repair and in homologous recombination. Binds and assemble on single-stranded DNA to form a nucleoprotein filament. Hydrolyzes ATP in a ssDNA-dependent manner and promotes DNA strand exchange between homologous DNA molecules.</text>
</comment>
<comment type="similarity">
    <text evidence="1">Belongs to the eukaryotic RecA-like protein family.</text>
</comment>